<gene>
    <name type="ordered locus">ASA_0240</name>
</gene>
<dbReference type="EMBL" id="CP000644">
    <property type="protein sequence ID" value="ABO88431.1"/>
    <property type="molecule type" value="Genomic_DNA"/>
</dbReference>
<dbReference type="RefSeq" id="WP_011898262.1">
    <property type="nucleotide sequence ID" value="NC_009348.1"/>
</dbReference>
<dbReference type="SMR" id="A4SHQ9"/>
<dbReference type="STRING" id="29491.GCA_000820065_01315"/>
<dbReference type="KEGG" id="asa:ASA_0240"/>
<dbReference type="PATRIC" id="fig|382245.13.peg.250"/>
<dbReference type="eggNOG" id="COG3681">
    <property type="taxonomic scope" value="Bacteria"/>
</dbReference>
<dbReference type="HOGENOM" id="CLU_051840_0_0_6"/>
<dbReference type="Proteomes" id="UP000000225">
    <property type="component" value="Chromosome"/>
</dbReference>
<dbReference type="GO" id="GO:0080146">
    <property type="term" value="F:L-cysteine desulfhydrase activity"/>
    <property type="evidence" value="ECO:0007669"/>
    <property type="project" value="TreeGrafter"/>
</dbReference>
<dbReference type="GO" id="GO:0019450">
    <property type="term" value="P:L-cysteine catabolic process to pyruvate"/>
    <property type="evidence" value="ECO:0007669"/>
    <property type="project" value="TreeGrafter"/>
</dbReference>
<dbReference type="HAMAP" id="MF_01845">
    <property type="entry name" value="UPF0597"/>
    <property type="match status" value="1"/>
</dbReference>
<dbReference type="InterPro" id="IPR005130">
    <property type="entry name" value="Ser_deHydtase-like_asu"/>
</dbReference>
<dbReference type="InterPro" id="IPR021144">
    <property type="entry name" value="UPF0597"/>
</dbReference>
<dbReference type="PANTHER" id="PTHR30501">
    <property type="entry name" value="UPF0597 PROTEIN YHAM"/>
    <property type="match status" value="1"/>
</dbReference>
<dbReference type="PANTHER" id="PTHR30501:SF2">
    <property type="entry name" value="UPF0597 PROTEIN YHAM"/>
    <property type="match status" value="1"/>
</dbReference>
<dbReference type="Pfam" id="PF03313">
    <property type="entry name" value="SDH_alpha"/>
    <property type="match status" value="1"/>
</dbReference>
<dbReference type="PIRSF" id="PIRSF006054">
    <property type="entry name" value="UCP006054"/>
    <property type="match status" value="1"/>
</dbReference>
<reference key="1">
    <citation type="journal article" date="2008" name="BMC Genomics">
        <title>The genome of Aeromonas salmonicida subsp. salmonicida A449: insights into the evolution of a fish pathogen.</title>
        <authorList>
            <person name="Reith M.E."/>
            <person name="Singh R.K."/>
            <person name="Curtis B."/>
            <person name="Boyd J.M."/>
            <person name="Bouevitch A."/>
            <person name="Kimball J."/>
            <person name="Munholland J."/>
            <person name="Murphy C."/>
            <person name="Sarty D."/>
            <person name="Williams J."/>
            <person name="Nash J.H."/>
            <person name="Johnson S.C."/>
            <person name="Brown L.L."/>
        </authorList>
    </citation>
    <scope>NUCLEOTIDE SEQUENCE [LARGE SCALE GENOMIC DNA]</scope>
    <source>
        <strain>A449</strain>
    </source>
</reference>
<evidence type="ECO:0000255" key="1">
    <source>
        <dbReference type="HAMAP-Rule" id="MF_01845"/>
    </source>
</evidence>
<protein>
    <recommendedName>
        <fullName evidence="1">UPF0597 protein ASA_0240</fullName>
    </recommendedName>
</protein>
<proteinExistence type="inferred from homology"/>
<comment type="similarity">
    <text evidence="1">Belongs to the UPF0597 family.</text>
</comment>
<feature type="chain" id="PRO_0000339782" description="UPF0597 protein ASA_0240">
    <location>
        <begin position="1"/>
        <end position="435"/>
    </location>
</feature>
<accession>A4SHQ9</accession>
<sequence>MRNTAMKAQWTDFITLLKREVVPALGCTEPMSVALAAANCRKLLGQTPTRVSVWVSGNLFKNGMGVGVPGTGMIGLPVAAAVGFTGGNPDAGLEVLNTLTPAQVEEAKALLPIIKVDVKDVPDVLYAEVLAEVEGHSARVVICTDHTRIVLMELDGEVLMEQNSAPGVQIQPAKSDKPAMTLREIVAFALEVPLAEIDFIGAAATMNQALADEGLQGYGLRIGKILTEQVERKLLSDDLMTLAMRLSSAASDARMDGAMLPAMSNSGSGNQGIAATMPVVAAARFLKASDEQLTRALVMSHLVAIYIKTHQNKLSALCAASTAAMGSGAAITWLLGGQFEQISHCINNMIGDVSGIICDGAGSACSMKVSTSTSAAVKSSLMAINNLHVPQSEGIVSDDVDETIANLGRLSKLGMLDTDIEIINIMRAKQQGKAQ</sequence>
<organism>
    <name type="scientific">Aeromonas salmonicida (strain A449)</name>
    <dbReference type="NCBI Taxonomy" id="382245"/>
    <lineage>
        <taxon>Bacteria</taxon>
        <taxon>Pseudomonadati</taxon>
        <taxon>Pseudomonadota</taxon>
        <taxon>Gammaproteobacteria</taxon>
        <taxon>Aeromonadales</taxon>
        <taxon>Aeromonadaceae</taxon>
        <taxon>Aeromonas</taxon>
    </lineage>
</organism>
<name>Y240_AERS4</name>